<name>UNG_AGARV</name>
<proteinExistence type="inferred from homology"/>
<evidence type="ECO:0000255" key="1">
    <source>
        <dbReference type="HAMAP-Rule" id="MF_00148"/>
    </source>
</evidence>
<feature type="chain" id="PRO_1000203375" description="Uracil-DNA glycosylase">
    <location>
        <begin position="1"/>
        <end position="225"/>
    </location>
</feature>
<feature type="active site" description="Proton acceptor" evidence="1">
    <location>
        <position position="64"/>
    </location>
</feature>
<sequence length="225" mass="25689">MSMLDGEWAKAVGAEFKKPYYRDLYNFVRDEYATHVVYPPADDIFNAMHFTPLDKVKVLILGQDPYHNVNQAHGLSFSVLPSQKDIPPSLQNIYKELHDDLGCDIPNNGYLKKWADQGVLLLNTVLTVRAHQANSHQGHGWEKFTDAIIEAVNEQDRPIVYMLWGRPAQSKIPMLTNPKHLILKAPHPSPLSAYRGFFGCKHFSKANEFLKEHGVEPVDWQIEDI</sequence>
<organism>
    <name type="scientific">Agathobacter rectalis (strain ATCC 33656 / DSM 3377 / JCM 17463 / KCTC 5835 / VPI 0990)</name>
    <name type="common">Eubacterium rectale</name>
    <dbReference type="NCBI Taxonomy" id="515619"/>
    <lineage>
        <taxon>Bacteria</taxon>
        <taxon>Bacillati</taxon>
        <taxon>Bacillota</taxon>
        <taxon>Clostridia</taxon>
        <taxon>Lachnospirales</taxon>
        <taxon>Lachnospiraceae</taxon>
        <taxon>Agathobacter</taxon>
    </lineage>
</organism>
<dbReference type="EC" id="3.2.2.27" evidence="1"/>
<dbReference type="EMBL" id="CP001107">
    <property type="protein sequence ID" value="ACR75223.1"/>
    <property type="molecule type" value="Genomic_DNA"/>
</dbReference>
<dbReference type="RefSeq" id="WP_012742322.1">
    <property type="nucleotide sequence ID" value="NC_012781.1"/>
</dbReference>
<dbReference type="SMR" id="C4Z8Z2"/>
<dbReference type="STRING" id="515619.EUBREC_1469"/>
<dbReference type="PaxDb" id="515619-EUBREC_1469"/>
<dbReference type="GeneID" id="86988290"/>
<dbReference type="KEGG" id="ere:EUBREC_1469"/>
<dbReference type="HOGENOM" id="CLU_032162_3_0_9"/>
<dbReference type="Proteomes" id="UP000001477">
    <property type="component" value="Chromosome"/>
</dbReference>
<dbReference type="GO" id="GO:0005737">
    <property type="term" value="C:cytoplasm"/>
    <property type="evidence" value="ECO:0007669"/>
    <property type="project" value="UniProtKB-SubCell"/>
</dbReference>
<dbReference type="GO" id="GO:0004844">
    <property type="term" value="F:uracil DNA N-glycosylase activity"/>
    <property type="evidence" value="ECO:0007669"/>
    <property type="project" value="UniProtKB-UniRule"/>
</dbReference>
<dbReference type="GO" id="GO:0097510">
    <property type="term" value="P:base-excision repair, AP site formation via deaminated base removal"/>
    <property type="evidence" value="ECO:0007669"/>
    <property type="project" value="TreeGrafter"/>
</dbReference>
<dbReference type="CDD" id="cd10027">
    <property type="entry name" value="UDG-F1-like"/>
    <property type="match status" value="1"/>
</dbReference>
<dbReference type="FunFam" id="3.40.470.10:FF:000001">
    <property type="entry name" value="Uracil-DNA glycosylase"/>
    <property type="match status" value="1"/>
</dbReference>
<dbReference type="Gene3D" id="3.40.470.10">
    <property type="entry name" value="Uracil-DNA glycosylase-like domain"/>
    <property type="match status" value="1"/>
</dbReference>
<dbReference type="HAMAP" id="MF_00148">
    <property type="entry name" value="UDG"/>
    <property type="match status" value="1"/>
</dbReference>
<dbReference type="InterPro" id="IPR002043">
    <property type="entry name" value="UDG_fam1"/>
</dbReference>
<dbReference type="InterPro" id="IPR018085">
    <property type="entry name" value="Ura-DNA_Glyclase_AS"/>
</dbReference>
<dbReference type="InterPro" id="IPR005122">
    <property type="entry name" value="Uracil-DNA_glycosylase-like"/>
</dbReference>
<dbReference type="InterPro" id="IPR036895">
    <property type="entry name" value="Uracil-DNA_glycosylase-like_sf"/>
</dbReference>
<dbReference type="NCBIfam" id="NF003588">
    <property type="entry name" value="PRK05254.1-1"/>
    <property type="match status" value="1"/>
</dbReference>
<dbReference type="NCBIfam" id="NF003589">
    <property type="entry name" value="PRK05254.1-2"/>
    <property type="match status" value="1"/>
</dbReference>
<dbReference type="NCBIfam" id="NF003591">
    <property type="entry name" value="PRK05254.1-4"/>
    <property type="match status" value="1"/>
</dbReference>
<dbReference type="NCBIfam" id="NF003592">
    <property type="entry name" value="PRK05254.1-5"/>
    <property type="match status" value="1"/>
</dbReference>
<dbReference type="NCBIfam" id="TIGR00628">
    <property type="entry name" value="ung"/>
    <property type="match status" value="1"/>
</dbReference>
<dbReference type="PANTHER" id="PTHR11264">
    <property type="entry name" value="URACIL-DNA GLYCOSYLASE"/>
    <property type="match status" value="1"/>
</dbReference>
<dbReference type="PANTHER" id="PTHR11264:SF0">
    <property type="entry name" value="URACIL-DNA GLYCOSYLASE"/>
    <property type="match status" value="1"/>
</dbReference>
<dbReference type="Pfam" id="PF03167">
    <property type="entry name" value="UDG"/>
    <property type="match status" value="1"/>
</dbReference>
<dbReference type="SMART" id="SM00986">
    <property type="entry name" value="UDG"/>
    <property type="match status" value="1"/>
</dbReference>
<dbReference type="SMART" id="SM00987">
    <property type="entry name" value="UreE_C"/>
    <property type="match status" value="1"/>
</dbReference>
<dbReference type="SUPFAM" id="SSF52141">
    <property type="entry name" value="Uracil-DNA glycosylase-like"/>
    <property type="match status" value="1"/>
</dbReference>
<dbReference type="PROSITE" id="PS00130">
    <property type="entry name" value="U_DNA_GLYCOSYLASE"/>
    <property type="match status" value="1"/>
</dbReference>
<comment type="function">
    <text evidence="1">Excises uracil residues from the DNA which can arise as a result of misincorporation of dUMP residues by DNA polymerase or due to deamination of cytosine.</text>
</comment>
<comment type="catalytic activity">
    <reaction evidence="1">
        <text>Hydrolyzes single-stranded DNA or mismatched double-stranded DNA and polynucleotides, releasing free uracil.</text>
        <dbReference type="EC" id="3.2.2.27"/>
    </reaction>
</comment>
<comment type="subcellular location">
    <subcellularLocation>
        <location evidence="1">Cytoplasm</location>
    </subcellularLocation>
</comment>
<comment type="similarity">
    <text evidence="1">Belongs to the uracil-DNA glycosylase (UDG) superfamily. UNG family.</text>
</comment>
<gene>
    <name evidence="1" type="primary">ung</name>
    <name type="ordered locus">EUBREC_1469</name>
</gene>
<keyword id="KW-0963">Cytoplasm</keyword>
<keyword id="KW-0227">DNA damage</keyword>
<keyword id="KW-0234">DNA repair</keyword>
<keyword id="KW-0378">Hydrolase</keyword>
<reference key="1">
    <citation type="journal article" date="2009" name="Proc. Natl. Acad. Sci. U.S.A.">
        <title>Characterizing a model human gut microbiota composed of members of its two dominant bacterial phyla.</title>
        <authorList>
            <person name="Mahowald M.A."/>
            <person name="Rey F.E."/>
            <person name="Seedorf H."/>
            <person name="Turnbaugh P.J."/>
            <person name="Fulton R.S."/>
            <person name="Wollam A."/>
            <person name="Shah N."/>
            <person name="Wang C."/>
            <person name="Magrini V."/>
            <person name="Wilson R.K."/>
            <person name="Cantarel B.L."/>
            <person name="Coutinho P.M."/>
            <person name="Henrissat B."/>
            <person name="Crock L.W."/>
            <person name="Russell A."/>
            <person name="Verberkmoes N.C."/>
            <person name="Hettich R.L."/>
            <person name="Gordon J.I."/>
        </authorList>
    </citation>
    <scope>NUCLEOTIDE SEQUENCE [LARGE SCALE GENOMIC DNA]</scope>
    <source>
        <strain>ATCC 33656 / DSM 3377 / JCM 17463 / KCTC 5835 / LMG 30912 / VPI 0990</strain>
    </source>
</reference>
<accession>C4Z8Z2</accession>
<protein>
    <recommendedName>
        <fullName evidence="1">Uracil-DNA glycosylase</fullName>
        <shortName evidence="1">UDG</shortName>
        <ecNumber evidence="1">3.2.2.27</ecNumber>
    </recommendedName>
</protein>